<proteinExistence type="inferred from homology"/>
<evidence type="ECO:0000255" key="1">
    <source>
        <dbReference type="HAMAP-Rule" id="MF_01969"/>
    </source>
</evidence>
<name>KYNB_BURVG</name>
<organism>
    <name type="scientific">Burkholderia vietnamiensis (strain G4 / LMG 22486)</name>
    <name type="common">Burkholderia cepacia (strain R1808)</name>
    <dbReference type="NCBI Taxonomy" id="269482"/>
    <lineage>
        <taxon>Bacteria</taxon>
        <taxon>Pseudomonadati</taxon>
        <taxon>Pseudomonadota</taxon>
        <taxon>Betaproteobacteria</taxon>
        <taxon>Burkholderiales</taxon>
        <taxon>Burkholderiaceae</taxon>
        <taxon>Burkholderia</taxon>
        <taxon>Burkholderia cepacia complex</taxon>
    </lineage>
</organism>
<dbReference type="EC" id="3.5.1.9" evidence="1"/>
<dbReference type="EMBL" id="CP000614">
    <property type="protein sequence ID" value="ABO55690.1"/>
    <property type="molecule type" value="Genomic_DNA"/>
</dbReference>
<dbReference type="SMR" id="A4JHD7"/>
<dbReference type="KEGG" id="bvi:Bcep1808_2699"/>
<dbReference type="eggNOG" id="COG1878">
    <property type="taxonomic scope" value="Bacteria"/>
</dbReference>
<dbReference type="HOGENOM" id="CLU_030671_3_1_4"/>
<dbReference type="UniPathway" id="UPA00333">
    <property type="reaction ID" value="UER00454"/>
</dbReference>
<dbReference type="Proteomes" id="UP000002287">
    <property type="component" value="Chromosome 1"/>
</dbReference>
<dbReference type="GO" id="GO:0004061">
    <property type="term" value="F:arylformamidase activity"/>
    <property type="evidence" value="ECO:0000250"/>
    <property type="project" value="UniProtKB"/>
</dbReference>
<dbReference type="GO" id="GO:0004328">
    <property type="term" value="F:formamidase activity"/>
    <property type="evidence" value="ECO:0007669"/>
    <property type="project" value="InterPro"/>
</dbReference>
<dbReference type="GO" id="GO:0008270">
    <property type="term" value="F:zinc ion binding"/>
    <property type="evidence" value="ECO:0007669"/>
    <property type="project" value="UniProtKB-UniRule"/>
</dbReference>
<dbReference type="GO" id="GO:0043420">
    <property type="term" value="P:anthranilate metabolic process"/>
    <property type="evidence" value="ECO:0000250"/>
    <property type="project" value="UniProtKB"/>
</dbReference>
<dbReference type="GO" id="GO:0019441">
    <property type="term" value="P:L-tryptophan catabolic process to kynurenine"/>
    <property type="evidence" value="ECO:0000250"/>
    <property type="project" value="UniProtKB"/>
</dbReference>
<dbReference type="FunFam" id="3.50.30.50:FF:000001">
    <property type="entry name" value="Kynurenine formamidase"/>
    <property type="match status" value="1"/>
</dbReference>
<dbReference type="Gene3D" id="3.50.30.50">
    <property type="entry name" value="Putative cyclase"/>
    <property type="match status" value="1"/>
</dbReference>
<dbReference type="HAMAP" id="MF_01969">
    <property type="entry name" value="KynB"/>
    <property type="match status" value="1"/>
</dbReference>
<dbReference type="InterPro" id="IPR007325">
    <property type="entry name" value="KFase/CYL"/>
</dbReference>
<dbReference type="InterPro" id="IPR037175">
    <property type="entry name" value="KFase_sf"/>
</dbReference>
<dbReference type="InterPro" id="IPR017484">
    <property type="entry name" value="Kynurenine_formamidase_bac"/>
</dbReference>
<dbReference type="NCBIfam" id="TIGR03035">
    <property type="entry name" value="trp_arylform"/>
    <property type="match status" value="1"/>
</dbReference>
<dbReference type="PANTHER" id="PTHR31118">
    <property type="entry name" value="CYCLASE-LIKE PROTEIN 2"/>
    <property type="match status" value="1"/>
</dbReference>
<dbReference type="PANTHER" id="PTHR31118:SF32">
    <property type="entry name" value="KYNURENINE FORMAMIDASE"/>
    <property type="match status" value="1"/>
</dbReference>
<dbReference type="Pfam" id="PF04199">
    <property type="entry name" value="Cyclase"/>
    <property type="match status" value="1"/>
</dbReference>
<dbReference type="SUPFAM" id="SSF102198">
    <property type="entry name" value="Putative cyclase"/>
    <property type="match status" value="1"/>
</dbReference>
<feature type="chain" id="PRO_0000362118" description="Kynurenine formamidase">
    <location>
        <begin position="1"/>
        <end position="213"/>
    </location>
</feature>
<feature type="active site" description="Proton donor/acceptor" evidence="1">
    <location>
        <position position="58"/>
    </location>
</feature>
<feature type="binding site" evidence="1">
    <location>
        <position position="18"/>
    </location>
    <ligand>
        <name>substrate</name>
    </ligand>
</feature>
<feature type="binding site" evidence="1">
    <location>
        <position position="48"/>
    </location>
    <ligand>
        <name>Zn(2+)</name>
        <dbReference type="ChEBI" id="CHEBI:29105"/>
        <label>1</label>
    </ligand>
</feature>
<feature type="binding site" evidence="1">
    <location>
        <position position="52"/>
    </location>
    <ligand>
        <name>Zn(2+)</name>
        <dbReference type="ChEBI" id="CHEBI:29105"/>
        <label>1</label>
    </ligand>
</feature>
<feature type="binding site" evidence="1">
    <location>
        <position position="54"/>
    </location>
    <ligand>
        <name>Zn(2+)</name>
        <dbReference type="ChEBI" id="CHEBI:29105"/>
        <label>1</label>
    </ligand>
</feature>
<feature type="binding site" evidence="1">
    <location>
        <position position="54"/>
    </location>
    <ligand>
        <name>Zn(2+)</name>
        <dbReference type="ChEBI" id="CHEBI:29105"/>
        <label>2</label>
    </ligand>
</feature>
<feature type="binding site" evidence="1">
    <location>
        <position position="160"/>
    </location>
    <ligand>
        <name>Zn(2+)</name>
        <dbReference type="ChEBI" id="CHEBI:29105"/>
        <label>2</label>
    </ligand>
</feature>
<feature type="binding site" evidence="1">
    <location>
        <position position="172"/>
    </location>
    <ligand>
        <name>Zn(2+)</name>
        <dbReference type="ChEBI" id="CHEBI:29105"/>
        <label>1</label>
    </ligand>
</feature>
<feature type="binding site" evidence="1">
    <location>
        <position position="172"/>
    </location>
    <ligand>
        <name>Zn(2+)</name>
        <dbReference type="ChEBI" id="CHEBI:29105"/>
        <label>2</label>
    </ligand>
</feature>
<accession>A4JHD7</accession>
<keyword id="KW-0378">Hydrolase</keyword>
<keyword id="KW-0479">Metal-binding</keyword>
<keyword id="KW-0823">Tryptophan catabolism</keyword>
<keyword id="KW-0862">Zinc</keyword>
<gene>
    <name evidence="1" type="primary">kynB</name>
    <name type="ordered locus">Bcep1808_2699</name>
</gene>
<sequence>MDTLWDISPPLSPATPVWPGDTPLSVERVWRMEAGSPVNVARLTLSPHTGAHCDAPLHYDADGAPIGAVPLDAYLGPCRVIHCVGAAPRVQPADVEAALDRVPPRVLLRTCAHASVERWDSDFCAVAPETIDLLAARGVKLIGIDTPSLDPQESKTMDAHHRVRAHRMAILEGIVLDDVPAGDYELIALPLKFTTLDASPVRAVLRALPGHSS</sequence>
<protein>
    <recommendedName>
        <fullName evidence="1">Kynurenine formamidase</fullName>
        <shortName evidence="1">KFA</shortName>
        <shortName evidence="1">KFase</shortName>
        <ecNumber evidence="1">3.5.1.9</ecNumber>
    </recommendedName>
    <alternativeName>
        <fullName evidence="1">Arylformamidase</fullName>
    </alternativeName>
    <alternativeName>
        <fullName evidence="1">N-formylkynurenine formamidase</fullName>
        <shortName evidence="1">FKF</shortName>
    </alternativeName>
</protein>
<reference key="1">
    <citation type="submission" date="2007-03" db="EMBL/GenBank/DDBJ databases">
        <title>Complete sequence of chromosome 1 of Burkholderia vietnamiensis G4.</title>
        <authorList>
            <consortium name="US DOE Joint Genome Institute"/>
            <person name="Copeland A."/>
            <person name="Lucas S."/>
            <person name="Lapidus A."/>
            <person name="Barry K."/>
            <person name="Detter J.C."/>
            <person name="Glavina del Rio T."/>
            <person name="Hammon N."/>
            <person name="Israni S."/>
            <person name="Dalin E."/>
            <person name="Tice H."/>
            <person name="Pitluck S."/>
            <person name="Chain P."/>
            <person name="Malfatti S."/>
            <person name="Shin M."/>
            <person name="Vergez L."/>
            <person name="Schmutz J."/>
            <person name="Larimer F."/>
            <person name="Land M."/>
            <person name="Hauser L."/>
            <person name="Kyrpides N."/>
            <person name="Tiedje J."/>
            <person name="Richardson P."/>
        </authorList>
    </citation>
    <scope>NUCLEOTIDE SEQUENCE [LARGE SCALE GENOMIC DNA]</scope>
    <source>
        <strain>G4 / LMG 22486</strain>
    </source>
</reference>
<comment type="function">
    <text evidence="1">Catalyzes the hydrolysis of N-formyl-L-kynurenine to L-kynurenine, the second step in the kynurenine pathway of tryptophan degradation.</text>
</comment>
<comment type="catalytic activity">
    <reaction evidence="1">
        <text>N-formyl-L-kynurenine + H2O = L-kynurenine + formate + H(+)</text>
        <dbReference type="Rhea" id="RHEA:13009"/>
        <dbReference type="ChEBI" id="CHEBI:15377"/>
        <dbReference type="ChEBI" id="CHEBI:15378"/>
        <dbReference type="ChEBI" id="CHEBI:15740"/>
        <dbReference type="ChEBI" id="CHEBI:57959"/>
        <dbReference type="ChEBI" id="CHEBI:58629"/>
        <dbReference type="EC" id="3.5.1.9"/>
    </reaction>
</comment>
<comment type="cofactor">
    <cofactor evidence="1">
        <name>Zn(2+)</name>
        <dbReference type="ChEBI" id="CHEBI:29105"/>
    </cofactor>
    <text evidence="1">Binds 2 zinc ions per subunit.</text>
</comment>
<comment type="pathway">
    <text evidence="1">Amino-acid degradation; L-tryptophan degradation via kynurenine pathway; L-kynurenine from L-tryptophan: step 2/2.</text>
</comment>
<comment type="subunit">
    <text evidence="1">Homodimer.</text>
</comment>
<comment type="similarity">
    <text evidence="1">Belongs to the Cyclase 1 superfamily. KynB family.</text>
</comment>